<reference key="1">
    <citation type="journal article" date="1989" name="Nucleic Acids Res.">
        <title>The complete nucleotide sequence of the maize chlorotic mottle virus genome.</title>
        <authorList>
            <person name="Nutter R.C."/>
            <person name="Scheets K."/>
            <person name="Panganiban L.C."/>
            <person name="Lommel S.A."/>
        </authorList>
    </citation>
    <scope>NUCLEOTIDE SEQUENCE [GENOMIC RNA]</scope>
</reference>
<reference key="2">
    <citation type="journal article" date="2016" name="Virus Res.">
        <title>Analysis of gene functions in Maize chlorotic mottle virus.</title>
        <authorList>
            <person name="Scheets K."/>
        </authorList>
    </citation>
    <scope>FUNCTION</scope>
</reference>
<feature type="chain" id="PRO_0000040211" description="RNA-directed RNA polymerase">
    <location>
        <begin position="1"/>
        <end position="965"/>
    </location>
</feature>
<feature type="chain" id="PRO_0000040212" description="Protein p50">
    <location>
        <begin position="1"/>
        <end position="438"/>
    </location>
</feature>
<feature type="domain" description="RdRp catalytic" evidence="1">
    <location>
        <begin position="662"/>
        <end position="778"/>
    </location>
</feature>
<comment type="function">
    <text evidence="2">RNA-dependent RNA polymerase that plays an essential role in the virus replication.</text>
</comment>
<comment type="catalytic activity">
    <reaction evidence="1">
        <text>RNA(n) + a ribonucleoside 5'-triphosphate = RNA(n+1) + diphosphate</text>
        <dbReference type="Rhea" id="RHEA:21248"/>
        <dbReference type="Rhea" id="RHEA-COMP:14527"/>
        <dbReference type="Rhea" id="RHEA-COMP:17342"/>
        <dbReference type="ChEBI" id="CHEBI:33019"/>
        <dbReference type="ChEBI" id="CHEBI:61557"/>
        <dbReference type="ChEBI" id="CHEBI:140395"/>
        <dbReference type="EC" id="2.7.7.48"/>
    </reaction>
</comment>
<comment type="miscellaneous">
    <text>Readthrough of the terminator UAG occurs at position 439.</text>
</comment>
<comment type="similarity">
    <text evidence="3">Belongs to the tombusviridae RNA polymerase family.</text>
</comment>
<gene>
    <name type="ORF">ORF2</name>
</gene>
<keyword id="KW-0547">Nucleotide-binding</keyword>
<keyword id="KW-0548">Nucleotidyltransferase</keyword>
<keyword id="KW-1185">Reference proteome</keyword>
<keyword id="KW-1159">RNA suppression of termination</keyword>
<keyword id="KW-0696">RNA-directed RNA polymerase</keyword>
<keyword id="KW-0808">Transferase</keyword>
<keyword id="KW-0693">Viral RNA replication</keyword>
<protein>
    <recommendedName>
        <fullName evidence="1">RNA-directed RNA polymerase</fullName>
        <ecNumber evidence="1">2.7.7.48</ecNumber>
    </recommendedName>
    <alternativeName>
        <fullName>111 kDa protein</fullName>
    </alternativeName>
    <alternativeName>
        <fullName>Protein p111</fullName>
    </alternativeName>
    <component>
        <recommendedName>
            <fullName>Protein p50</fullName>
        </recommendedName>
    </component>
</protein>
<organismHost>
    <name type="scientific">Zea mays</name>
    <name type="common">Maize</name>
    <dbReference type="NCBI Taxonomy" id="4577"/>
</organismHost>
<organism>
    <name type="scientific">Maize chlorotic mottle virus (isolate United States/Kansas/1987)</name>
    <name type="common">MCMV</name>
    <dbReference type="NCBI Taxonomy" id="882210"/>
    <lineage>
        <taxon>Viruses</taxon>
        <taxon>Riboviria</taxon>
        <taxon>Orthornavirae</taxon>
        <taxon>Kitrinoviricota</taxon>
        <taxon>Tolucaviricetes</taxon>
        <taxon>Tolivirales</taxon>
        <taxon>Tombusviridae</taxon>
        <taxon>Procedovirinae</taxon>
        <taxon>Machlomovirus</taxon>
        <taxon>Machlomovirus zeae</taxon>
    </lineage>
</organism>
<accession>P11640</accession>
<accession>Q9IBM2</accession>
<evidence type="ECO:0000255" key="1">
    <source>
        <dbReference type="PROSITE-ProRule" id="PRU00539"/>
    </source>
</evidence>
<evidence type="ECO:0000269" key="2">
    <source>
    </source>
</evidence>
<evidence type="ECO:0000305" key="3"/>
<proteinExistence type="inferred from homology"/>
<dbReference type="EC" id="2.7.7.48" evidence="1"/>
<dbReference type="EMBL" id="X14736">
    <property type="protein sequence ID" value="CAA32862.1"/>
    <property type="molecule type" value="Genomic_RNA"/>
</dbReference>
<dbReference type="EMBL" id="X14736">
    <property type="protein sequence ID" value="CAB55589.1"/>
    <property type="molecule type" value="Genomic_RNA"/>
</dbReference>
<dbReference type="PIR" id="JQ0058">
    <property type="entry name" value="JQ0058"/>
</dbReference>
<dbReference type="RefSeq" id="NP_619718.1">
    <property type="nucleotide sequence ID" value="NC_003627.1"/>
</dbReference>
<dbReference type="RefSeq" id="NP_619719.1">
    <property type="nucleotide sequence ID" value="NC_003627.1"/>
</dbReference>
<dbReference type="KEGG" id="vg:2652939"/>
<dbReference type="KEGG" id="vg:2652940"/>
<dbReference type="Proteomes" id="UP000007071">
    <property type="component" value="Segment"/>
</dbReference>
<dbReference type="GO" id="GO:0000166">
    <property type="term" value="F:nucleotide binding"/>
    <property type="evidence" value="ECO:0007669"/>
    <property type="project" value="UniProtKB-KW"/>
</dbReference>
<dbReference type="GO" id="GO:0003723">
    <property type="term" value="F:RNA binding"/>
    <property type="evidence" value="ECO:0007669"/>
    <property type="project" value="InterPro"/>
</dbReference>
<dbReference type="GO" id="GO:0003968">
    <property type="term" value="F:RNA-directed RNA polymerase activity"/>
    <property type="evidence" value="ECO:0007669"/>
    <property type="project" value="UniProtKB-KW"/>
</dbReference>
<dbReference type="GO" id="GO:0039694">
    <property type="term" value="P:viral RNA genome replication"/>
    <property type="evidence" value="ECO:0007669"/>
    <property type="project" value="InterPro"/>
</dbReference>
<dbReference type="Gene3D" id="3.30.70.270">
    <property type="match status" value="1"/>
</dbReference>
<dbReference type="InterPro" id="IPR043502">
    <property type="entry name" value="DNA/RNA_pol_sf"/>
</dbReference>
<dbReference type="InterPro" id="IPR043128">
    <property type="entry name" value="Rev_trsase/Diguanyl_cyclase"/>
</dbReference>
<dbReference type="InterPro" id="IPR007094">
    <property type="entry name" value="RNA-dir_pol_PSvirus"/>
</dbReference>
<dbReference type="InterPro" id="IPR002166">
    <property type="entry name" value="RNA_pol_HCV"/>
</dbReference>
<dbReference type="Pfam" id="PF00998">
    <property type="entry name" value="RdRP_3"/>
    <property type="match status" value="1"/>
</dbReference>
<dbReference type="SUPFAM" id="SSF56672">
    <property type="entry name" value="DNA/RNA polymerases"/>
    <property type="match status" value="1"/>
</dbReference>
<dbReference type="PROSITE" id="PS50507">
    <property type="entry name" value="RDRP_SSRNA_POS"/>
    <property type="match status" value="1"/>
</dbReference>
<name>RDRP_MCMVK</name>
<sequence>MATLPSIHAFWKLWWPTFSEERKMTVVQALRNGLTRKLFQITQIAQQILRWPPYIRERMTSSLGQSLVKTFQTLLGIRKALSRLCLTRNMNVDIFTMLLIPFKFLSQLCSQIVASANFVIQTFRHGLSRGLCLARCRNPETMRSGWSKHTLQMQNCSSTSPLMTPFQPQIARDLSNPHGLWMSTRNKLTRTGGSAIQQTSRYVRLAVRFSLLAAGAYISCVLARKALKEYVYRWELKSDQELPTREQSQISQVEQAMEQNGAMMVMKLNGPTAPILSLQDCLTKHVLVPEIVDEEGTVTQKEQSTFLIREFGPAVRNLVTLAKLEFGGIPKKTTANELTVWRFLVRKCEHANMNPTDSRTAISMALPYVFMPCRTDVGRASIPLRDESIEICRQYRAQFVEETPLRRVFNNPLSGKAWRNWVRHLGGLDDPALFQELKXGCLEEWLGVQSRRTRARHPKLRSHFKDTRHKTRRVFRIAGLGNLYEFGVHNNSAVNLERGLMERVFYVKDDKGELVSCPEPISGIFWKNLKGFRNSIVHHVGHRHPVSRETFLAYYTGPKRTMYEKAVNSLYEMPVSYDDAKLKTFVKAEKINLTKKADPVPRVIQPRAPRYNVELGRYLRPVEHPIYHAIDKIWGGPTIMKGYSVEQIGRHIENAFRSFTDPVAIGFDASRFDQHVSVEALRWEHSVYSRIYGYPELLTQLLRWQIHNRGTAYASDGAFNYQVDGKRMSGDMNISLGNCILATAITHDFVTKLGIPARLINNGDDNVLICPAVEVGRVRQELYRHWLNYGFEVISEEPVYILEQVEFCQMRPVFDGTQYTMMRDPRTTMSKDAYAVTPFNTPTAARRWMRAVGECGLSLTGGLPVKQEYYTALVKHGLDPKNIKQGKDFDSGLYYLSKLSNRKWQEVQESARYSFWLAFGYTPDEQRALEEYFKSWTPTFEWSTTGILAEIPECLLLKHNPLPPT</sequence>